<feature type="chain" id="PRO_1000083593" description="Cobalt-precorrin-5B C(1)-methyltransferase">
    <location>
        <begin position="1"/>
        <end position="364"/>
    </location>
</feature>
<sequence>MREETREQPAPLRSGLTTGSCATATSLAAARLLLSGETSDAVSITLPKGKVVQMRLEFCRLAGESAEAGTLKDAGDDPDVTHGALLYSQVRLLDEPSIRFVAGSGVGTVTRPGLVLAVGEPAINPVPRRMISEHLQRLADECGYFGGFEVTVNVQGGEQLALKTMNPRLGILGGLSILGTSGIVRPFSCAAYIASIHQGIDVAHTNGYTHIAACTGNASEDTMRRVYGLPEIALIEMGDFVGAVLKHLRKVPVPRLTLCGGFGKISKLAAGHMDLHSRHSSIDLPQLAGWAADIGADAALQAAIIGANTSQQALALAHAAGIALGDAVCAHALAFARSVVPAQVQVEVFAIDRQGGIVGRAGVQ</sequence>
<comment type="function">
    <text evidence="1">Catalyzes the methylation of C-1 in cobalt-precorrin-5B to form cobalt-precorrin-6A.</text>
</comment>
<comment type="catalytic activity">
    <reaction evidence="1">
        <text>Co-precorrin-5B + S-adenosyl-L-methionine = Co-precorrin-6A + S-adenosyl-L-homocysteine</text>
        <dbReference type="Rhea" id="RHEA:26285"/>
        <dbReference type="ChEBI" id="CHEBI:57856"/>
        <dbReference type="ChEBI" id="CHEBI:59789"/>
        <dbReference type="ChEBI" id="CHEBI:60063"/>
        <dbReference type="ChEBI" id="CHEBI:60064"/>
        <dbReference type="EC" id="2.1.1.195"/>
    </reaction>
</comment>
<comment type="pathway">
    <text evidence="1">Cofactor biosynthesis; adenosylcobalamin biosynthesis; cob(II)yrinate a,c-diamide from sirohydrochlorin (anaerobic route): step 6/10.</text>
</comment>
<comment type="similarity">
    <text evidence="1">Belongs to the CbiD family.</text>
</comment>
<gene>
    <name evidence="1" type="primary">cbiD</name>
    <name type="ordered locus">PputGB1_4887</name>
</gene>
<protein>
    <recommendedName>
        <fullName evidence="1">Cobalt-precorrin-5B C(1)-methyltransferase</fullName>
        <ecNumber evidence="1">2.1.1.195</ecNumber>
    </recommendedName>
    <alternativeName>
        <fullName evidence="1">Cobalt-precorrin-6A synthase</fullName>
    </alternativeName>
</protein>
<keyword id="KW-0169">Cobalamin biosynthesis</keyword>
<keyword id="KW-0489">Methyltransferase</keyword>
<keyword id="KW-0949">S-adenosyl-L-methionine</keyword>
<keyword id="KW-0808">Transferase</keyword>
<name>CBID_PSEPG</name>
<evidence type="ECO:0000255" key="1">
    <source>
        <dbReference type="HAMAP-Rule" id="MF_00787"/>
    </source>
</evidence>
<dbReference type="EC" id="2.1.1.195" evidence="1"/>
<dbReference type="EMBL" id="CP000926">
    <property type="protein sequence ID" value="ABZ00772.1"/>
    <property type="molecule type" value="Genomic_DNA"/>
</dbReference>
<dbReference type="RefSeq" id="WP_012274403.1">
    <property type="nucleotide sequence ID" value="NC_010322.1"/>
</dbReference>
<dbReference type="SMR" id="B0KK08"/>
<dbReference type="KEGG" id="ppg:PputGB1_4887"/>
<dbReference type="eggNOG" id="COG1903">
    <property type="taxonomic scope" value="Bacteria"/>
</dbReference>
<dbReference type="HOGENOM" id="CLU_041273_0_0_6"/>
<dbReference type="UniPathway" id="UPA00148">
    <property type="reaction ID" value="UER00227"/>
</dbReference>
<dbReference type="Proteomes" id="UP000002157">
    <property type="component" value="Chromosome"/>
</dbReference>
<dbReference type="GO" id="GO:0043780">
    <property type="term" value="F:cobalt-precorrin-5B C1-methyltransferase activity"/>
    <property type="evidence" value="ECO:0007669"/>
    <property type="project" value="RHEA"/>
</dbReference>
<dbReference type="GO" id="GO:0019251">
    <property type="term" value="P:anaerobic cobalamin biosynthetic process"/>
    <property type="evidence" value="ECO:0007669"/>
    <property type="project" value="UniProtKB-UniRule"/>
</dbReference>
<dbReference type="GO" id="GO:0032259">
    <property type="term" value="P:methylation"/>
    <property type="evidence" value="ECO:0007669"/>
    <property type="project" value="UniProtKB-KW"/>
</dbReference>
<dbReference type="Gene3D" id="3.30.2110.10">
    <property type="entry name" value="CbiD-like"/>
    <property type="match status" value="1"/>
</dbReference>
<dbReference type="HAMAP" id="MF_00787">
    <property type="entry name" value="CbiD"/>
    <property type="match status" value="1"/>
</dbReference>
<dbReference type="InterPro" id="IPR002748">
    <property type="entry name" value="CbiD"/>
</dbReference>
<dbReference type="InterPro" id="IPR036074">
    <property type="entry name" value="CbiD_sf"/>
</dbReference>
<dbReference type="NCBIfam" id="TIGR00312">
    <property type="entry name" value="cbiD"/>
    <property type="match status" value="1"/>
</dbReference>
<dbReference type="NCBIfam" id="NF000849">
    <property type="entry name" value="PRK00075.1-1"/>
    <property type="match status" value="1"/>
</dbReference>
<dbReference type="PANTHER" id="PTHR35863">
    <property type="entry name" value="COBALT-PRECORRIN-5B C(1)-METHYLTRANSFERASE"/>
    <property type="match status" value="1"/>
</dbReference>
<dbReference type="PANTHER" id="PTHR35863:SF1">
    <property type="entry name" value="COBALT-PRECORRIN-5B C(1)-METHYLTRANSFERASE"/>
    <property type="match status" value="1"/>
</dbReference>
<dbReference type="Pfam" id="PF01888">
    <property type="entry name" value="CbiD"/>
    <property type="match status" value="1"/>
</dbReference>
<dbReference type="PIRSF" id="PIRSF026782">
    <property type="entry name" value="CbiD"/>
    <property type="match status" value="1"/>
</dbReference>
<dbReference type="SUPFAM" id="SSF111342">
    <property type="entry name" value="CbiD-like"/>
    <property type="match status" value="1"/>
</dbReference>
<organism>
    <name type="scientific">Pseudomonas putida (strain GB-1)</name>
    <dbReference type="NCBI Taxonomy" id="76869"/>
    <lineage>
        <taxon>Bacteria</taxon>
        <taxon>Pseudomonadati</taxon>
        <taxon>Pseudomonadota</taxon>
        <taxon>Gammaproteobacteria</taxon>
        <taxon>Pseudomonadales</taxon>
        <taxon>Pseudomonadaceae</taxon>
        <taxon>Pseudomonas</taxon>
    </lineage>
</organism>
<proteinExistence type="inferred from homology"/>
<reference key="1">
    <citation type="submission" date="2008-01" db="EMBL/GenBank/DDBJ databases">
        <title>Complete sequence of Pseudomonas putida GB-1.</title>
        <authorList>
            <consortium name="US DOE Joint Genome Institute"/>
            <person name="Copeland A."/>
            <person name="Lucas S."/>
            <person name="Lapidus A."/>
            <person name="Barry K."/>
            <person name="Glavina del Rio T."/>
            <person name="Dalin E."/>
            <person name="Tice H."/>
            <person name="Pitluck S."/>
            <person name="Bruce D."/>
            <person name="Goodwin L."/>
            <person name="Chertkov O."/>
            <person name="Brettin T."/>
            <person name="Detter J.C."/>
            <person name="Han C."/>
            <person name="Kuske C.R."/>
            <person name="Schmutz J."/>
            <person name="Larimer F."/>
            <person name="Land M."/>
            <person name="Hauser L."/>
            <person name="Kyrpides N."/>
            <person name="Kim E."/>
            <person name="McCarthy J.K."/>
            <person name="Richardson P."/>
        </authorList>
    </citation>
    <scope>NUCLEOTIDE SEQUENCE [LARGE SCALE GENOMIC DNA]</scope>
    <source>
        <strain>GB-1</strain>
    </source>
</reference>
<accession>B0KK08</accession>